<evidence type="ECO:0000255" key="1"/>
<evidence type="ECO:0000305" key="2"/>
<protein>
    <recommendedName>
        <fullName>Probable K(+)/H(+) antiporter subunit G</fullName>
    </recommendedName>
    <alternativeName>
        <fullName>pH adaptation potassium efflux system protein G</fullName>
        <shortName>Pha system subunit G</shortName>
    </alternativeName>
</protein>
<reference key="1">
    <citation type="journal article" date="1998" name="Mol. Microbiol.">
        <title>The pha gene cluster of Rhizobium meliloti involved in pH adaptation and symbiosis encodes a novel type of K+ efflux system.</title>
        <authorList>
            <person name="Putnoky P."/>
            <person name="Kereszt A."/>
            <person name="Nakamura T."/>
            <person name="Endre G."/>
            <person name="Grosskopf E."/>
            <person name="Kiss P."/>
            <person name="Kondorosi A."/>
        </authorList>
    </citation>
    <scope>NUCLEOTIDE SEQUENCE [GENOMIC DNA]</scope>
    <source>
        <strain>41</strain>
    </source>
</reference>
<reference key="2">
    <citation type="journal article" date="2001" name="Proc. Natl. Acad. Sci. U.S.A.">
        <title>Analysis of the chromosome sequence of the legume symbiont Sinorhizobium meliloti strain 1021.</title>
        <authorList>
            <person name="Capela D."/>
            <person name="Barloy-Hubler F."/>
            <person name="Gouzy J."/>
            <person name="Bothe G."/>
            <person name="Ampe F."/>
            <person name="Batut J."/>
            <person name="Boistard P."/>
            <person name="Becker A."/>
            <person name="Boutry M."/>
            <person name="Cadieu E."/>
            <person name="Dreano S."/>
            <person name="Gloux S."/>
            <person name="Godrie T."/>
            <person name="Goffeau A."/>
            <person name="Kahn D."/>
            <person name="Kiss E."/>
            <person name="Lelaure V."/>
            <person name="Masuy D."/>
            <person name="Pohl T."/>
            <person name="Portetelle D."/>
            <person name="Puehler A."/>
            <person name="Purnelle B."/>
            <person name="Ramsperger U."/>
            <person name="Renard C."/>
            <person name="Thebault P."/>
            <person name="Vandenbol M."/>
            <person name="Weidner S."/>
            <person name="Galibert F."/>
        </authorList>
    </citation>
    <scope>NUCLEOTIDE SEQUENCE [LARGE SCALE GENOMIC DNA]</scope>
    <source>
        <strain>1021</strain>
    </source>
</reference>
<reference key="3">
    <citation type="journal article" date="2001" name="Science">
        <title>The composite genome of the legume symbiont Sinorhizobium meliloti.</title>
        <authorList>
            <person name="Galibert F."/>
            <person name="Finan T.M."/>
            <person name="Long S.R."/>
            <person name="Puehler A."/>
            <person name="Abola P."/>
            <person name="Ampe F."/>
            <person name="Barloy-Hubler F."/>
            <person name="Barnett M.J."/>
            <person name="Becker A."/>
            <person name="Boistard P."/>
            <person name="Bothe G."/>
            <person name="Boutry M."/>
            <person name="Bowser L."/>
            <person name="Buhrmester J."/>
            <person name="Cadieu E."/>
            <person name="Capela D."/>
            <person name="Chain P."/>
            <person name="Cowie A."/>
            <person name="Davis R.W."/>
            <person name="Dreano S."/>
            <person name="Federspiel N.A."/>
            <person name="Fisher R.F."/>
            <person name="Gloux S."/>
            <person name="Godrie T."/>
            <person name="Goffeau A."/>
            <person name="Golding B."/>
            <person name="Gouzy J."/>
            <person name="Gurjal M."/>
            <person name="Hernandez-Lucas I."/>
            <person name="Hong A."/>
            <person name="Huizar L."/>
            <person name="Hyman R.W."/>
            <person name="Jones T."/>
            <person name="Kahn D."/>
            <person name="Kahn M.L."/>
            <person name="Kalman S."/>
            <person name="Keating D.H."/>
            <person name="Kiss E."/>
            <person name="Komp C."/>
            <person name="Lelaure V."/>
            <person name="Masuy D."/>
            <person name="Palm C."/>
            <person name="Peck M.C."/>
            <person name="Pohl T.M."/>
            <person name="Portetelle D."/>
            <person name="Purnelle B."/>
            <person name="Ramsperger U."/>
            <person name="Surzycki R."/>
            <person name="Thebault P."/>
            <person name="Vandenbol M."/>
            <person name="Vorhoelter F.J."/>
            <person name="Weidner S."/>
            <person name="Wells D.H."/>
            <person name="Wong K."/>
            <person name="Yeh K.-C."/>
            <person name="Batut J."/>
        </authorList>
    </citation>
    <scope>NUCLEOTIDE SEQUENCE [LARGE SCALE GENOMIC DNA]</scope>
    <source>
        <strain>1021</strain>
    </source>
</reference>
<accession>Q9Z3Q3</accession>
<dbReference type="EMBL" id="X93358">
    <property type="protein sequence ID" value="CAA63740.2"/>
    <property type="molecule type" value="Genomic_DNA"/>
</dbReference>
<dbReference type="EMBL" id="AL591688">
    <property type="protein sequence ID" value="CAC47494.1"/>
    <property type="molecule type" value="Genomic_DNA"/>
</dbReference>
<dbReference type="RefSeq" id="NP_387021.1">
    <property type="nucleotide sequence ID" value="NC_003047.1"/>
</dbReference>
<dbReference type="RefSeq" id="WP_010970285.1">
    <property type="nucleotide sequence ID" value="NC_003047.1"/>
</dbReference>
<dbReference type="SMR" id="Q9Z3Q3"/>
<dbReference type="TCDB" id="2.A.63.1.1">
    <property type="family name" value="the monovalent cation (k(+) or na(+)):proton antiporter-3 (cpa3) family"/>
</dbReference>
<dbReference type="EnsemblBacteria" id="CAC47494">
    <property type="protein sequence ID" value="CAC47494"/>
    <property type="gene ID" value="SMc03184"/>
</dbReference>
<dbReference type="KEGG" id="sme:SMc03184"/>
<dbReference type="PATRIC" id="fig|266834.11.peg.4436"/>
<dbReference type="eggNOG" id="COG1320">
    <property type="taxonomic scope" value="Bacteria"/>
</dbReference>
<dbReference type="HOGENOM" id="CLU_121334_1_0_5"/>
<dbReference type="OrthoDB" id="4427992at2"/>
<dbReference type="Proteomes" id="UP000001976">
    <property type="component" value="Chromosome"/>
</dbReference>
<dbReference type="GO" id="GO:0005886">
    <property type="term" value="C:plasma membrane"/>
    <property type="evidence" value="ECO:0007669"/>
    <property type="project" value="UniProtKB-SubCell"/>
</dbReference>
<dbReference type="GO" id="GO:0015385">
    <property type="term" value="F:sodium:proton antiporter activity"/>
    <property type="evidence" value="ECO:0007669"/>
    <property type="project" value="TreeGrafter"/>
</dbReference>
<dbReference type="GO" id="GO:0006813">
    <property type="term" value="P:potassium ion transport"/>
    <property type="evidence" value="ECO:0007669"/>
    <property type="project" value="UniProtKB-KW"/>
</dbReference>
<dbReference type="InterPro" id="IPR005133">
    <property type="entry name" value="PhaG_MnhG_YufB"/>
</dbReference>
<dbReference type="NCBIfam" id="TIGR01300">
    <property type="entry name" value="CPA3_mnhG_phaG"/>
    <property type="match status" value="1"/>
</dbReference>
<dbReference type="PANTHER" id="PTHR34703">
    <property type="entry name" value="ANTIPORTER SUBUNIT MNHG2-RELATED"/>
    <property type="match status" value="1"/>
</dbReference>
<dbReference type="PANTHER" id="PTHR34703:SF1">
    <property type="entry name" value="ANTIPORTER SUBUNIT MNHG2-RELATED"/>
    <property type="match status" value="1"/>
</dbReference>
<dbReference type="Pfam" id="PF03334">
    <property type="entry name" value="PhaG_MnhG_YufB"/>
    <property type="match status" value="1"/>
</dbReference>
<comment type="function">
    <text>Part of a K(+) efflux system which is required for the adaptation of R.meliloti to alkaline pH as well as for the infection process during symbiotic nodule development.</text>
</comment>
<comment type="subunit">
    <text>May form a hetero-oligomeric complex that consists of six subunits: PhaAB, PhaC, PhaD, PhaE, PhaF and PhaG.</text>
</comment>
<comment type="subcellular location">
    <subcellularLocation>
        <location evidence="2">Cell membrane</location>
        <topology evidence="2">Multi-pass membrane protein</topology>
    </subcellularLocation>
</comment>
<comment type="similarity">
    <text evidence="2">Belongs to the CPA3 antiporters (TC 2.A.63) subunit G family.</text>
</comment>
<feature type="chain" id="PRO_0000086865" description="Probable K(+)/H(+) antiporter subunit G">
    <location>
        <begin position="1"/>
        <end position="121"/>
    </location>
</feature>
<feature type="transmembrane region" description="Helical" evidence="1">
    <location>
        <begin position="10"/>
        <end position="32"/>
    </location>
</feature>
<feature type="transmembrane region" description="Helical" evidence="1">
    <location>
        <begin position="45"/>
        <end position="67"/>
    </location>
</feature>
<feature type="transmembrane region" description="Helical" evidence="1">
    <location>
        <begin position="72"/>
        <end position="94"/>
    </location>
</feature>
<keyword id="KW-0050">Antiport</keyword>
<keyword id="KW-1003">Cell membrane</keyword>
<keyword id="KW-0375">Hydrogen ion transport</keyword>
<keyword id="KW-0406">Ion transport</keyword>
<keyword id="KW-0472">Membrane</keyword>
<keyword id="KW-0630">Potassium</keyword>
<keyword id="KW-0633">Potassium transport</keyword>
<keyword id="KW-1185">Reference proteome</keyword>
<keyword id="KW-0812">Transmembrane</keyword>
<keyword id="KW-1133">Transmembrane helix</keyword>
<keyword id="KW-0813">Transport</keyword>
<sequence length="121" mass="13220">MSHLTDLPPWAALLVCGLMLVGAATTLIGSLGLLRLPDFYARLHAPTIATSGGTILLCLASILCFAVLQSRWVFHEVLIIFFVTVTTPVTLMLLGQATLYRDRFEEQQGVPRKQKPAPGEE</sequence>
<proteinExistence type="inferred from homology"/>
<name>PHAG_RHIME</name>
<gene>
    <name type="primary">phaG</name>
    <name type="synonym">phaG1</name>
    <name type="ordered locus">R02915</name>
    <name type="ORF">SMc03184</name>
</gene>
<organism>
    <name type="scientific">Rhizobium meliloti (strain 1021)</name>
    <name type="common">Ensifer meliloti</name>
    <name type="synonym">Sinorhizobium meliloti</name>
    <dbReference type="NCBI Taxonomy" id="266834"/>
    <lineage>
        <taxon>Bacteria</taxon>
        <taxon>Pseudomonadati</taxon>
        <taxon>Pseudomonadota</taxon>
        <taxon>Alphaproteobacteria</taxon>
        <taxon>Hyphomicrobiales</taxon>
        <taxon>Rhizobiaceae</taxon>
        <taxon>Sinorhizobium/Ensifer group</taxon>
        <taxon>Sinorhizobium</taxon>
    </lineage>
</organism>